<comment type="function">
    <text evidence="1">Catalyzes oxygen-dependent 5-hydroxyuridine (ho5U) modification at position 34 in tRNAs.</text>
</comment>
<comment type="catalytic activity">
    <reaction evidence="1">
        <text>uridine(34) in tRNA + AH2 + O2 = 5-hydroxyuridine(34) in tRNA + A + H2O</text>
        <dbReference type="Rhea" id="RHEA:64224"/>
        <dbReference type="Rhea" id="RHEA-COMP:11727"/>
        <dbReference type="Rhea" id="RHEA-COMP:13381"/>
        <dbReference type="ChEBI" id="CHEBI:13193"/>
        <dbReference type="ChEBI" id="CHEBI:15377"/>
        <dbReference type="ChEBI" id="CHEBI:15379"/>
        <dbReference type="ChEBI" id="CHEBI:17499"/>
        <dbReference type="ChEBI" id="CHEBI:65315"/>
        <dbReference type="ChEBI" id="CHEBI:136877"/>
    </reaction>
</comment>
<comment type="similarity">
    <text evidence="1">Belongs to the TrhO family.</text>
</comment>
<feature type="chain" id="PRO_1000200386" description="tRNA uridine(34) hydroxylase">
    <location>
        <begin position="1"/>
        <end position="281"/>
    </location>
</feature>
<feature type="domain" description="Rhodanese" evidence="1">
    <location>
        <begin position="121"/>
        <end position="214"/>
    </location>
</feature>
<feature type="active site" description="Cysteine persulfide intermediate" evidence="1">
    <location>
        <position position="174"/>
    </location>
</feature>
<organism>
    <name type="scientific">Wolbachia pipientis subsp. Culex pipiens (strain wPip)</name>
    <dbReference type="NCBI Taxonomy" id="570417"/>
    <lineage>
        <taxon>Bacteria</taxon>
        <taxon>Pseudomonadati</taxon>
        <taxon>Pseudomonadota</taxon>
        <taxon>Alphaproteobacteria</taxon>
        <taxon>Rickettsiales</taxon>
        <taxon>Anaplasmataceae</taxon>
        <taxon>Wolbachieae</taxon>
        <taxon>Wolbachia</taxon>
    </lineage>
</organism>
<accession>B3CLQ6</accession>
<keyword id="KW-0560">Oxidoreductase</keyword>
<keyword id="KW-0819">tRNA processing</keyword>
<evidence type="ECO:0000255" key="1">
    <source>
        <dbReference type="HAMAP-Rule" id="MF_00469"/>
    </source>
</evidence>
<name>TRHO_WOLPP</name>
<protein>
    <recommendedName>
        <fullName evidence="1">tRNA uridine(34) hydroxylase</fullName>
        <ecNumber evidence="1">1.14.-.-</ecNumber>
    </recommendedName>
    <alternativeName>
        <fullName evidence="1">tRNA hydroxylation protein O</fullName>
    </alternativeName>
</protein>
<proteinExistence type="inferred from homology"/>
<dbReference type="EC" id="1.14.-.-" evidence="1"/>
<dbReference type="EMBL" id="AM999887">
    <property type="protein sequence ID" value="CAQ54824.1"/>
    <property type="molecule type" value="Genomic_DNA"/>
</dbReference>
<dbReference type="RefSeq" id="WP_012481894.1">
    <property type="nucleotide sequence ID" value="NC_010981.1"/>
</dbReference>
<dbReference type="SMR" id="B3CLQ6"/>
<dbReference type="KEGG" id="wpi:WP0716"/>
<dbReference type="eggNOG" id="COG1054">
    <property type="taxonomic scope" value="Bacteria"/>
</dbReference>
<dbReference type="HOGENOM" id="CLU_038878_0_1_5"/>
<dbReference type="Proteomes" id="UP000008814">
    <property type="component" value="Chromosome"/>
</dbReference>
<dbReference type="GO" id="GO:0016705">
    <property type="term" value="F:oxidoreductase activity, acting on paired donors, with incorporation or reduction of molecular oxygen"/>
    <property type="evidence" value="ECO:0007669"/>
    <property type="project" value="UniProtKB-UniRule"/>
</dbReference>
<dbReference type="GO" id="GO:0006400">
    <property type="term" value="P:tRNA modification"/>
    <property type="evidence" value="ECO:0007669"/>
    <property type="project" value="UniProtKB-UniRule"/>
</dbReference>
<dbReference type="CDD" id="cd01518">
    <property type="entry name" value="RHOD_YceA"/>
    <property type="match status" value="1"/>
</dbReference>
<dbReference type="Gene3D" id="3.30.70.100">
    <property type="match status" value="1"/>
</dbReference>
<dbReference type="Gene3D" id="3.40.250.10">
    <property type="entry name" value="Rhodanese-like domain"/>
    <property type="match status" value="1"/>
</dbReference>
<dbReference type="HAMAP" id="MF_00469">
    <property type="entry name" value="TrhO"/>
    <property type="match status" value="1"/>
</dbReference>
<dbReference type="InterPro" id="IPR001763">
    <property type="entry name" value="Rhodanese-like_dom"/>
</dbReference>
<dbReference type="InterPro" id="IPR036873">
    <property type="entry name" value="Rhodanese-like_dom_sf"/>
</dbReference>
<dbReference type="InterPro" id="IPR020936">
    <property type="entry name" value="TrhO"/>
</dbReference>
<dbReference type="InterPro" id="IPR040503">
    <property type="entry name" value="TRHO_N"/>
</dbReference>
<dbReference type="NCBIfam" id="NF001136">
    <property type="entry name" value="PRK00142.1-4"/>
    <property type="match status" value="1"/>
</dbReference>
<dbReference type="PANTHER" id="PTHR43268:SF3">
    <property type="entry name" value="RHODANESE-LIKE DOMAIN-CONTAINING PROTEIN 7-RELATED"/>
    <property type="match status" value="1"/>
</dbReference>
<dbReference type="PANTHER" id="PTHR43268">
    <property type="entry name" value="THIOSULFATE SULFURTRANSFERASE/RHODANESE-LIKE DOMAIN-CONTAINING PROTEIN 2"/>
    <property type="match status" value="1"/>
</dbReference>
<dbReference type="Pfam" id="PF00581">
    <property type="entry name" value="Rhodanese"/>
    <property type="match status" value="1"/>
</dbReference>
<dbReference type="Pfam" id="PF17773">
    <property type="entry name" value="UPF0176_N"/>
    <property type="match status" value="1"/>
</dbReference>
<dbReference type="SMART" id="SM00450">
    <property type="entry name" value="RHOD"/>
    <property type="match status" value="1"/>
</dbReference>
<dbReference type="SUPFAM" id="SSF52821">
    <property type="entry name" value="Rhodanese/Cell cycle control phosphatase"/>
    <property type="match status" value="1"/>
</dbReference>
<dbReference type="PROSITE" id="PS50206">
    <property type="entry name" value="RHODANESE_3"/>
    <property type="match status" value="1"/>
</dbReference>
<gene>
    <name evidence="1" type="primary">trhO</name>
    <name type="ordered locus">WP0716</name>
</gene>
<sequence>MSFVIATFYHFVKLSNYYDMKDEIKVACDNVELKGTILLAEEGINATVSGERNAIDKIFDFLRSDYRLRDLTWKESAAEYQPFSKMKVRLKREIVNLGVSNLDTSVRGQYIDPDYWDDFISQPDVLVIDTRNDYEVKLGKFKNAINPHTQRFRDFPQWAESFSESKDLKVAMYCTGGIRCEKSTAYMKSLGFNDVYHLKGGILSYLEKTHNKSGNWEGECFVFDDRIAVDHSLAPSDKIKCIFCSSKVSTDELKSVPRGQVVCSDCKSLSIERKLEFNTNL</sequence>
<reference key="1">
    <citation type="journal article" date="2008" name="Mol. Biol. Evol.">
        <title>Genome evolution of Wolbachia strain wPip from the Culex pipiens group.</title>
        <authorList>
            <person name="Klasson L."/>
            <person name="Walker T."/>
            <person name="Sebaihia M."/>
            <person name="Sanders M.J."/>
            <person name="Quail M.A."/>
            <person name="Lord A."/>
            <person name="Sanders S."/>
            <person name="Earl J."/>
            <person name="O'Neill S.L."/>
            <person name="Thomson N."/>
            <person name="Sinkins S.P."/>
            <person name="Parkhill J."/>
        </authorList>
    </citation>
    <scope>NUCLEOTIDE SEQUENCE [LARGE SCALE GENOMIC DNA]</scope>
    <source>
        <strain>wPip</strain>
    </source>
</reference>